<keyword id="KW-0067">ATP-binding</keyword>
<keyword id="KW-0143">Chaperone</keyword>
<keyword id="KW-0175">Coiled coil</keyword>
<keyword id="KW-0963">Cytoplasm</keyword>
<keyword id="KW-0547">Nucleotide-binding</keyword>
<keyword id="KW-0677">Repeat</keyword>
<keyword id="KW-0346">Stress response</keyword>
<gene>
    <name type="primary">clpB</name>
</gene>
<protein>
    <recommendedName>
        <fullName>Chaperone protein ClpB</fullName>
    </recommendedName>
</protein>
<organism>
    <name type="scientific">Leptolyngbya boryana</name>
    <name type="common">Plectonema boryanum</name>
    <dbReference type="NCBI Taxonomy" id="1184"/>
    <lineage>
        <taxon>Bacteria</taxon>
        <taxon>Bacillati</taxon>
        <taxon>Cyanobacteriota</taxon>
        <taxon>Cyanophyceae</taxon>
        <taxon>Leptolyngbyales</taxon>
        <taxon>Leptolyngbyaceae</taxon>
        <taxon>Leptolyngbya group</taxon>
        <taxon>Leptolyngbya</taxon>
    </lineage>
</organism>
<reference key="1">
    <citation type="journal article" date="1998" name="J. Bacteriol.">
        <title>ClpB in a cyanobacterium: predicted structure, phylogenetic relationships, and regulation by light and temperature.</title>
        <authorList>
            <person name="Celerin M."/>
            <person name="Gilpin A.A."/>
            <person name="Schisler N.J."/>
            <person name="Ivanov A.G."/>
            <person name="Miskiewicz E."/>
            <person name="Krol M."/>
            <person name="Laudenbach D.E."/>
        </authorList>
    </citation>
    <scope>NUCLEOTIDE SEQUENCE [GENOMIC DNA]</scope>
    <scope>SUBCELLULAR LOCATION</scope>
    <scope>INDUCTION</scope>
    <source>
        <strain>UTEX 485 / CCAP 1462/4</strain>
    </source>
</reference>
<feature type="chain" id="PRO_0000191155" description="Chaperone protein ClpB">
    <location>
        <begin position="1"/>
        <end position="873"/>
    </location>
</feature>
<feature type="domain" description="Clp R" evidence="2">
    <location>
        <begin position="6"/>
        <end position="149"/>
    </location>
</feature>
<feature type="region of interest" description="Repeat 1" evidence="2">
    <location>
        <begin position="9"/>
        <end position="73"/>
    </location>
</feature>
<feature type="region of interest" description="Repeat 2" evidence="2">
    <location>
        <begin position="85"/>
        <end position="149"/>
    </location>
</feature>
<feature type="region of interest" description="NBD1" evidence="1">
    <location>
        <begin position="162"/>
        <end position="343"/>
    </location>
</feature>
<feature type="region of interest" description="Linker" evidence="1">
    <location>
        <begin position="344"/>
        <end position="552"/>
    </location>
</feature>
<feature type="region of interest" description="NBD2" evidence="1">
    <location>
        <begin position="562"/>
        <end position="773"/>
    </location>
</feature>
<feature type="region of interest" description="C-terminal" evidence="1">
    <location>
        <begin position="774"/>
        <end position="873"/>
    </location>
</feature>
<feature type="coiled-coil region" evidence="1">
    <location>
        <begin position="394"/>
        <end position="528"/>
    </location>
</feature>
<feature type="binding site" evidence="1">
    <location>
        <begin position="209"/>
        <end position="216"/>
    </location>
    <ligand>
        <name>ATP</name>
        <dbReference type="ChEBI" id="CHEBI:30616"/>
        <label>1</label>
    </ligand>
</feature>
<feature type="binding site" evidence="1">
    <location>
        <begin position="612"/>
        <end position="619"/>
    </location>
    <ligand>
        <name>ATP</name>
        <dbReference type="ChEBI" id="CHEBI:30616"/>
        <label>2</label>
    </ligand>
</feature>
<name>CLPB_LEPBY</name>
<accession>O87444</accession>
<sequence length="873" mass="99305">MQPTNSEKFTEKVWEAIYRTQEMYKQAQQQQIETEHLMKALLEQDGLAISIFNKLAVPVDRVRDRTDDFIRRQPKVSGSGTSVYWGRRADALLXRAEEYRKQFEDSFISIEHLLLGYAQDSRFGKALLSEFRYPDEAKLRNAIEQVRGNQKVTDQTPENKYESLEKYGRDLTQYAREGKLDPVIGRDDEIRRTIQILSRRTKNNPVLIGEPGVGKTAIAEGLAQRILSGDVPQSLKDRKLIALDMGALIAGAKYRGEFEERLKAVLKEVTDSRGNIILFIDEIHTVVGAGATQGAMDAGNLLKPMLARGELRCIGATTLDEYRKYIEKDAALERRFQQVFVDQPSVEDTISILRGLKERYEVHHGVKISDSALVAAATLSTRYISDRFLPSKAIDLVDEAAAKLKMEITSKPEELDEVDRKVLQLEMERLSLQKENDAGSRDRLERLERELADFKEDQSKLNAQWQAEKSVITDLQKLKEEIDRVNLEIQQAERDYDLNRAAELKYGKLNELNRKVEETESQLSQIQKSGATLLREEVLESDIAEIISKWTGIPVSKLVESEMQKLLQLDDVLHQRVIGQDEAVTAVSDAIQRSRAGLSDPNRPTASFIFLGPTGVGKTELAKALAAFLFDTEEAMVRIDMSEYMEKHSVSRLIGAPPGYVGYEEGGQLTEAVRRRPYSVILFDEIEKAHPDVFNVMLQILDDGRVTDSQGRTVDFKNTIIIMTSNIGSQYIFEYGGDDDRYEEILSRVMEAMLSNFRPEFLNRIDEIIIFHSLQKAQLREIVKIQTHRLESRLARKMSLKLSDAALDFLAEGFDPVYGARPLKRAIQRELETTIAKEILRSNFTEGDTIFVDVGETERLEFKRLPSEVLTTQ</sequence>
<proteinExistence type="evidence at transcript level"/>
<dbReference type="EMBL" id="AF061279">
    <property type="protein sequence ID" value="AAC62621.1"/>
    <property type="status" value="ALT_INIT"/>
    <property type="molecule type" value="Genomic_DNA"/>
</dbReference>
<dbReference type="GO" id="GO:0005737">
    <property type="term" value="C:cytoplasm"/>
    <property type="evidence" value="ECO:0007669"/>
    <property type="project" value="UniProtKB-SubCell"/>
</dbReference>
<dbReference type="GO" id="GO:0005524">
    <property type="term" value="F:ATP binding"/>
    <property type="evidence" value="ECO:0007669"/>
    <property type="project" value="UniProtKB-KW"/>
</dbReference>
<dbReference type="GO" id="GO:0016887">
    <property type="term" value="F:ATP hydrolysis activity"/>
    <property type="evidence" value="ECO:0007669"/>
    <property type="project" value="InterPro"/>
</dbReference>
<dbReference type="GO" id="GO:0034605">
    <property type="term" value="P:cellular response to heat"/>
    <property type="evidence" value="ECO:0007669"/>
    <property type="project" value="TreeGrafter"/>
</dbReference>
<dbReference type="GO" id="GO:0042026">
    <property type="term" value="P:protein refolding"/>
    <property type="evidence" value="ECO:0007669"/>
    <property type="project" value="InterPro"/>
</dbReference>
<dbReference type="CDD" id="cd00009">
    <property type="entry name" value="AAA"/>
    <property type="match status" value="1"/>
</dbReference>
<dbReference type="CDD" id="cd19499">
    <property type="entry name" value="RecA-like_ClpB_Hsp104-like"/>
    <property type="match status" value="1"/>
</dbReference>
<dbReference type="FunFam" id="3.40.50.300:FF:000120">
    <property type="entry name" value="ATP-dependent chaperone ClpB"/>
    <property type="match status" value="1"/>
</dbReference>
<dbReference type="FunFam" id="3.40.50.300:FF:000025">
    <property type="entry name" value="ATP-dependent Clp protease subunit"/>
    <property type="match status" value="1"/>
</dbReference>
<dbReference type="FunFam" id="3.40.50.300:FF:000010">
    <property type="entry name" value="Chaperone clpB 1, putative"/>
    <property type="match status" value="1"/>
</dbReference>
<dbReference type="Gene3D" id="1.10.8.60">
    <property type="match status" value="1"/>
</dbReference>
<dbReference type="Gene3D" id="1.10.1780.10">
    <property type="entry name" value="Clp, N-terminal domain"/>
    <property type="match status" value="1"/>
</dbReference>
<dbReference type="Gene3D" id="3.40.50.300">
    <property type="entry name" value="P-loop containing nucleotide triphosphate hydrolases"/>
    <property type="match status" value="3"/>
</dbReference>
<dbReference type="InterPro" id="IPR003593">
    <property type="entry name" value="AAA+_ATPase"/>
</dbReference>
<dbReference type="InterPro" id="IPR003959">
    <property type="entry name" value="ATPase_AAA_core"/>
</dbReference>
<dbReference type="InterPro" id="IPR017730">
    <property type="entry name" value="Chaperonin_ClpB"/>
</dbReference>
<dbReference type="InterPro" id="IPR019489">
    <property type="entry name" value="Clp_ATPase_C"/>
</dbReference>
<dbReference type="InterPro" id="IPR036628">
    <property type="entry name" value="Clp_N_dom_sf"/>
</dbReference>
<dbReference type="InterPro" id="IPR004176">
    <property type="entry name" value="Clp_R_dom"/>
</dbReference>
<dbReference type="InterPro" id="IPR001270">
    <property type="entry name" value="ClpA/B"/>
</dbReference>
<dbReference type="InterPro" id="IPR018368">
    <property type="entry name" value="ClpA/B_CS1"/>
</dbReference>
<dbReference type="InterPro" id="IPR028299">
    <property type="entry name" value="ClpA/B_CS2"/>
</dbReference>
<dbReference type="InterPro" id="IPR041546">
    <property type="entry name" value="ClpA/ClpB_AAA_lid"/>
</dbReference>
<dbReference type="InterPro" id="IPR050130">
    <property type="entry name" value="ClpA_ClpB"/>
</dbReference>
<dbReference type="InterPro" id="IPR027417">
    <property type="entry name" value="P-loop_NTPase"/>
</dbReference>
<dbReference type="NCBIfam" id="TIGR03346">
    <property type="entry name" value="chaperone_ClpB"/>
    <property type="match status" value="1"/>
</dbReference>
<dbReference type="PANTHER" id="PTHR11638">
    <property type="entry name" value="ATP-DEPENDENT CLP PROTEASE"/>
    <property type="match status" value="1"/>
</dbReference>
<dbReference type="PANTHER" id="PTHR11638:SF18">
    <property type="entry name" value="HEAT SHOCK PROTEIN 104"/>
    <property type="match status" value="1"/>
</dbReference>
<dbReference type="Pfam" id="PF00004">
    <property type="entry name" value="AAA"/>
    <property type="match status" value="1"/>
</dbReference>
<dbReference type="Pfam" id="PF07724">
    <property type="entry name" value="AAA_2"/>
    <property type="match status" value="1"/>
</dbReference>
<dbReference type="Pfam" id="PF17871">
    <property type="entry name" value="AAA_lid_9"/>
    <property type="match status" value="1"/>
</dbReference>
<dbReference type="Pfam" id="PF02861">
    <property type="entry name" value="Clp_N"/>
    <property type="match status" value="2"/>
</dbReference>
<dbReference type="Pfam" id="PF10431">
    <property type="entry name" value="ClpB_D2-small"/>
    <property type="match status" value="1"/>
</dbReference>
<dbReference type="PRINTS" id="PR00300">
    <property type="entry name" value="CLPPROTEASEA"/>
</dbReference>
<dbReference type="SMART" id="SM00382">
    <property type="entry name" value="AAA"/>
    <property type="match status" value="2"/>
</dbReference>
<dbReference type="SMART" id="SM01086">
    <property type="entry name" value="ClpB_D2-small"/>
    <property type="match status" value="1"/>
</dbReference>
<dbReference type="SUPFAM" id="SSF81923">
    <property type="entry name" value="Double Clp-N motif"/>
    <property type="match status" value="1"/>
</dbReference>
<dbReference type="SUPFAM" id="SSF52540">
    <property type="entry name" value="P-loop containing nucleoside triphosphate hydrolases"/>
    <property type="match status" value="2"/>
</dbReference>
<dbReference type="PROSITE" id="PS51903">
    <property type="entry name" value="CLP_R"/>
    <property type="match status" value="1"/>
</dbReference>
<dbReference type="PROSITE" id="PS00870">
    <property type="entry name" value="CLPAB_1"/>
    <property type="match status" value="1"/>
</dbReference>
<dbReference type="PROSITE" id="PS00871">
    <property type="entry name" value="CLPAB_2"/>
    <property type="match status" value="1"/>
</dbReference>
<comment type="function">
    <text evidence="1">Part of a stress-induced multi-chaperone system, it is involved in the recovery of the cell from heat-induced damage, in cooperation with DnaK, DnaJ and GrpE. Acts before DnaK, in the processing of protein aggregates. Protein binding stimulates the ATPase activity; ATP hydrolysis unfolds the denatured protein aggregates, which probably helps expose new hydrophobic binding sites on the surface of ClpB-bound aggregates, contributing to the solubilization and refolding of denatured protein aggregates by DnaK (By similarity).</text>
</comment>
<comment type="subunit">
    <text evidence="1">Homohexamer. The oligomerization is ATP-dependent (By similarity).</text>
</comment>
<comment type="subcellular location">
    <subcellularLocation>
        <location evidence="3">Cytoplasm</location>
    </subcellularLocation>
</comment>
<comment type="induction">
    <text evidence="3">By stress conditions, such as excess light and low temperatures.</text>
</comment>
<comment type="domain">
    <text evidence="1">The Clp repeat (R) domain probably functions as a substrate-discriminating domain, recruiting aggregated proteins to the ClpB hexamer and/or stabilizing bound proteins. The NBD2 domain is responsible for oligomerization, whereas the NBD1 domain stabilizes the hexamer probably in an ATP-dependent manner. The movement of the coiled-coil domain is essential for ClpB ability to rescue proteins from an aggregated state, probably by pulling apart large aggregated proteins, which are bound between the coiled-coils motifs of adjacent ClpB subunits in the functional hexamer (By similarity).</text>
</comment>
<comment type="similarity">
    <text evidence="4">Belongs to the ClpA/ClpB family.</text>
</comment>
<comment type="sequence caution" evidence="4">
    <conflict type="erroneous initiation">
        <sequence resource="EMBL-CDS" id="AAC62621"/>
    </conflict>
</comment>
<evidence type="ECO:0000250" key="1"/>
<evidence type="ECO:0000255" key="2">
    <source>
        <dbReference type="PROSITE-ProRule" id="PRU01251"/>
    </source>
</evidence>
<evidence type="ECO:0000269" key="3">
    <source>
    </source>
</evidence>
<evidence type="ECO:0000305" key="4"/>